<protein>
    <recommendedName>
        <fullName evidence="6">Transmembrane channel-like protein 2-A</fullName>
    </recommendedName>
</protein>
<reference key="1">
    <citation type="journal article" date="2014" name="Proc. Natl. Acad. Sci. U.S.A.">
        <title>Tip-link protein protocadherin 15 interacts with transmembrane channel-like proteins TMC1 and TMC2.</title>
        <authorList>
            <person name="Maeda R."/>
            <person name="Kindt K.S."/>
            <person name="Mo W."/>
            <person name="Morgan C.P."/>
            <person name="Erickson T."/>
            <person name="Zhao H."/>
            <person name="Clemens-Grisham R."/>
            <person name="Barr-Gillespie P.G."/>
            <person name="Nicolson T."/>
        </authorList>
    </citation>
    <scope>NUCLEOTIDE SEQUENCE [MRNA]</scope>
    <scope>FUNCTION</scope>
    <scope>INTERACTION WITH PCDH15A</scope>
    <scope>SUBCELLULAR LOCATION</scope>
    <scope>TISSUE SPECIFICITY</scope>
    <scope>DEVELOPMENTAL STAGE</scope>
    <scope>PHYLOGENETIC ANALYSIS</scope>
</reference>
<reference key="2">
    <citation type="journal article" date="2013" name="Nature">
        <title>The zebrafish reference genome sequence and its relationship to the human genome.</title>
        <authorList>
            <person name="Howe K."/>
            <person name="Clark M.D."/>
            <person name="Torroja C.F."/>
            <person name="Torrance J."/>
            <person name="Berthelot C."/>
            <person name="Muffato M."/>
            <person name="Collins J.E."/>
            <person name="Humphray S."/>
            <person name="McLaren K."/>
            <person name="Matthews L."/>
            <person name="McLaren S."/>
            <person name="Sealy I."/>
            <person name="Caccamo M."/>
            <person name="Churcher C."/>
            <person name="Scott C."/>
            <person name="Barrett J.C."/>
            <person name="Koch R."/>
            <person name="Rauch G.J."/>
            <person name="White S."/>
            <person name="Chow W."/>
            <person name="Kilian B."/>
            <person name="Quintais L.T."/>
            <person name="Guerra-Assuncao J.A."/>
            <person name="Zhou Y."/>
            <person name="Gu Y."/>
            <person name="Yen J."/>
            <person name="Vogel J.H."/>
            <person name="Eyre T."/>
            <person name="Redmond S."/>
            <person name="Banerjee R."/>
            <person name="Chi J."/>
            <person name="Fu B."/>
            <person name="Langley E."/>
            <person name="Maguire S.F."/>
            <person name="Laird G.K."/>
            <person name="Lloyd D."/>
            <person name="Kenyon E."/>
            <person name="Donaldson S."/>
            <person name="Sehra H."/>
            <person name="Almeida-King J."/>
            <person name="Loveland J."/>
            <person name="Trevanion S."/>
            <person name="Jones M."/>
            <person name="Quail M."/>
            <person name="Willey D."/>
            <person name="Hunt A."/>
            <person name="Burton J."/>
            <person name="Sims S."/>
            <person name="McLay K."/>
            <person name="Plumb B."/>
            <person name="Davis J."/>
            <person name="Clee C."/>
            <person name="Oliver K."/>
            <person name="Clark R."/>
            <person name="Riddle C."/>
            <person name="Elliot D."/>
            <person name="Threadgold G."/>
            <person name="Harden G."/>
            <person name="Ware D."/>
            <person name="Begum S."/>
            <person name="Mortimore B."/>
            <person name="Kerry G."/>
            <person name="Heath P."/>
            <person name="Phillimore B."/>
            <person name="Tracey A."/>
            <person name="Corby N."/>
            <person name="Dunn M."/>
            <person name="Johnson C."/>
            <person name="Wood J."/>
            <person name="Clark S."/>
            <person name="Pelan S."/>
            <person name="Griffiths G."/>
            <person name="Smith M."/>
            <person name="Glithero R."/>
            <person name="Howden P."/>
            <person name="Barker N."/>
            <person name="Lloyd C."/>
            <person name="Stevens C."/>
            <person name="Harley J."/>
            <person name="Holt K."/>
            <person name="Panagiotidis G."/>
            <person name="Lovell J."/>
            <person name="Beasley H."/>
            <person name="Henderson C."/>
            <person name="Gordon D."/>
            <person name="Auger K."/>
            <person name="Wright D."/>
            <person name="Collins J."/>
            <person name="Raisen C."/>
            <person name="Dyer L."/>
            <person name="Leung K."/>
            <person name="Robertson L."/>
            <person name="Ambridge K."/>
            <person name="Leongamornlert D."/>
            <person name="McGuire S."/>
            <person name="Gilderthorp R."/>
            <person name="Griffiths C."/>
            <person name="Manthravadi D."/>
            <person name="Nichol S."/>
            <person name="Barker G."/>
            <person name="Whitehead S."/>
            <person name="Kay M."/>
            <person name="Brown J."/>
            <person name="Murnane C."/>
            <person name="Gray E."/>
            <person name="Humphries M."/>
            <person name="Sycamore N."/>
            <person name="Barker D."/>
            <person name="Saunders D."/>
            <person name="Wallis J."/>
            <person name="Babbage A."/>
            <person name="Hammond S."/>
            <person name="Mashreghi-Mohammadi M."/>
            <person name="Barr L."/>
            <person name="Martin S."/>
            <person name="Wray P."/>
            <person name="Ellington A."/>
            <person name="Matthews N."/>
            <person name="Ellwood M."/>
            <person name="Woodmansey R."/>
            <person name="Clark G."/>
            <person name="Cooper J."/>
            <person name="Tromans A."/>
            <person name="Grafham D."/>
            <person name="Skuce C."/>
            <person name="Pandian R."/>
            <person name="Andrews R."/>
            <person name="Harrison E."/>
            <person name="Kimberley A."/>
            <person name="Garnett J."/>
            <person name="Fosker N."/>
            <person name="Hall R."/>
            <person name="Garner P."/>
            <person name="Kelly D."/>
            <person name="Bird C."/>
            <person name="Palmer S."/>
            <person name="Gehring I."/>
            <person name="Berger A."/>
            <person name="Dooley C.M."/>
            <person name="Ersan-Urun Z."/>
            <person name="Eser C."/>
            <person name="Geiger H."/>
            <person name="Geisler M."/>
            <person name="Karotki L."/>
            <person name="Kirn A."/>
            <person name="Konantz J."/>
            <person name="Konantz M."/>
            <person name="Oberlander M."/>
            <person name="Rudolph-Geiger S."/>
            <person name="Teucke M."/>
            <person name="Lanz C."/>
            <person name="Raddatz G."/>
            <person name="Osoegawa K."/>
            <person name="Zhu B."/>
            <person name="Rapp A."/>
            <person name="Widaa S."/>
            <person name="Langford C."/>
            <person name="Yang F."/>
            <person name="Schuster S.C."/>
            <person name="Carter N.P."/>
            <person name="Harrow J."/>
            <person name="Ning Z."/>
            <person name="Herrero J."/>
            <person name="Searle S.M."/>
            <person name="Enright A."/>
            <person name="Geisler R."/>
            <person name="Plasterk R.H."/>
            <person name="Lee C."/>
            <person name="Westerfield M."/>
            <person name="de Jong P.J."/>
            <person name="Zon L.I."/>
            <person name="Postlethwait J.H."/>
            <person name="Nusslein-Volhard C."/>
            <person name="Hubbard T.J."/>
            <person name="Roest Crollius H."/>
            <person name="Rogers J."/>
            <person name="Stemple D.L."/>
        </authorList>
    </citation>
    <scope>NUCLEOTIDE SEQUENCE [LARGE SCALE GENOMIC DNA]</scope>
    <source>
        <strain>Tuebingen</strain>
    </source>
</reference>
<feature type="chain" id="PRO_0000441915" description="Transmembrane channel-like protein 2-A">
    <location>
        <begin position="1"/>
        <end position="916"/>
    </location>
</feature>
<feature type="topological domain" description="Cytoplasmic" evidence="7">
    <location>
        <begin position="1"/>
        <end position="271"/>
    </location>
</feature>
<feature type="transmembrane region" description="Helical" evidence="2">
    <location>
        <begin position="272"/>
        <end position="292"/>
    </location>
</feature>
<feature type="topological domain" description="Extracellular" evidence="7">
    <location>
        <begin position="293"/>
        <end position="344"/>
    </location>
</feature>
<feature type="transmembrane region" description="Helical" evidence="2">
    <location>
        <begin position="345"/>
        <end position="365"/>
    </location>
</feature>
<feature type="topological domain" description="Cytoplasmic" evidence="7">
    <location>
        <begin position="366"/>
        <end position="438"/>
    </location>
</feature>
<feature type="transmembrane region" description="Helical" evidence="2">
    <location>
        <begin position="439"/>
        <end position="459"/>
    </location>
</feature>
<feature type="topological domain" description="Extracellular" evidence="7">
    <location>
        <begin position="460"/>
        <end position="478"/>
    </location>
</feature>
<feature type="transmembrane region" description="Helical" evidence="2">
    <location>
        <begin position="479"/>
        <end position="499"/>
    </location>
</feature>
<feature type="topological domain" description="Cytoplasmic" evidence="7">
    <location>
        <begin position="500"/>
        <end position="516"/>
    </location>
</feature>
<feature type="transmembrane region" description="Helical" evidence="2">
    <location>
        <begin position="517"/>
        <end position="537"/>
    </location>
</feature>
<feature type="topological domain" description="Extracellular" evidence="7">
    <location>
        <begin position="538"/>
        <end position="649"/>
    </location>
</feature>
<feature type="transmembrane region" description="Helical" evidence="2">
    <location>
        <begin position="650"/>
        <end position="670"/>
    </location>
</feature>
<feature type="topological domain" description="Cytoplasmic" evidence="7">
    <location>
        <begin position="671"/>
        <end position="704"/>
    </location>
</feature>
<feature type="transmembrane region" description="Helical" evidence="2">
    <location>
        <begin position="705"/>
        <end position="725"/>
    </location>
</feature>
<feature type="topological domain" description="Extracellular" evidence="7">
    <location>
        <begin position="726"/>
        <end position="762"/>
    </location>
</feature>
<feature type="transmembrane region" description="Helical" evidence="2">
    <location>
        <begin position="763"/>
        <end position="783"/>
    </location>
</feature>
<feature type="topological domain" description="Cytoplasmic" evidence="7">
    <location>
        <begin position="784"/>
        <end position="916"/>
    </location>
</feature>
<feature type="region of interest" description="Disordered" evidence="4">
    <location>
        <begin position="1"/>
        <end position="159"/>
    </location>
</feature>
<feature type="region of interest" description="Disordered" evidence="4">
    <location>
        <begin position="804"/>
        <end position="916"/>
    </location>
</feature>
<feature type="compositionally biased region" description="Basic and acidic residues" evidence="4">
    <location>
        <begin position="1"/>
        <end position="13"/>
    </location>
</feature>
<feature type="compositionally biased region" description="Acidic residues" evidence="4">
    <location>
        <begin position="14"/>
        <end position="26"/>
    </location>
</feature>
<feature type="compositionally biased region" description="Basic residues" evidence="4">
    <location>
        <begin position="31"/>
        <end position="45"/>
    </location>
</feature>
<feature type="compositionally biased region" description="Basic residues" evidence="4">
    <location>
        <begin position="62"/>
        <end position="72"/>
    </location>
</feature>
<feature type="compositionally biased region" description="Basic and acidic residues" evidence="4">
    <location>
        <begin position="97"/>
        <end position="107"/>
    </location>
</feature>
<feature type="compositionally biased region" description="Basic residues" evidence="4">
    <location>
        <begin position="108"/>
        <end position="117"/>
    </location>
</feature>
<feature type="compositionally biased region" description="Basic and acidic residues" evidence="4">
    <location>
        <begin position="118"/>
        <end position="138"/>
    </location>
</feature>
<feature type="compositionally biased region" description="Acidic residues" evidence="4">
    <location>
        <begin position="145"/>
        <end position="157"/>
    </location>
</feature>
<feature type="compositionally biased region" description="Basic and acidic residues" evidence="4">
    <location>
        <begin position="804"/>
        <end position="818"/>
    </location>
</feature>
<feature type="compositionally biased region" description="Low complexity" evidence="4">
    <location>
        <begin position="883"/>
        <end position="892"/>
    </location>
</feature>
<gene>
    <name evidence="6" type="primary">tmc2a</name>
</gene>
<proteinExistence type="evidence at protein level"/>
<dbReference type="EMBL" id="KM115407">
    <property type="protein sequence ID" value="AIK19896.1"/>
    <property type="molecule type" value="mRNA"/>
</dbReference>
<dbReference type="EMBL" id="BX571945">
    <property type="status" value="NOT_ANNOTATED_CDS"/>
    <property type="molecule type" value="Genomic_DNA"/>
</dbReference>
<dbReference type="EMBL" id="BX950207">
    <property type="status" value="NOT_ANNOTATED_CDS"/>
    <property type="molecule type" value="Genomic_DNA"/>
</dbReference>
<dbReference type="RefSeq" id="NP_001289166.1">
    <property type="nucleotide sequence ID" value="NM_001302237.1"/>
</dbReference>
<dbReference type="SMR" id="E7FFT2"/>
<dbReference type="FunCoup" id="E7FFT2">
    <property type="interactions" value="577"/>
</dbReference>
<dbReference type="STRING" id="7955.ENSDARP00000068128"/>
<dbReference type="TCDB" id="1.A.17.4.13">
    <property type="family name" value="the calcium-dependent chloride channel (ca-clc) family"/>
</dbReference>
<dbReference type="PaxDb" id="7955-ENSDARP00000117851"/>
<dbReference type="Ensembl" id="ENSDART00000073638">
    <property type="protein sequence ID" value="ENSDARP00000068128"/>
    <property type="gene ID" value="ENSDARG00000033104"/>
</dbReference>
<dbReference type="GeneID" id="571240"/>
<dbReference type="KEGG" id="dre:571240"/>
<dbReference type="AGR" id="ZFIN:ZDB-GENE-060526-280"/>
<dbReference type="CTD" id="571240"/>
<dbReference type="ZFIN" id="ZDB-GENE-060526-280">
    <property type="gene designation" value="tmc2a"/>
</dbReference>
<dbReference type="eggNOG" id="ENOG502QVCF">
    <property type="taxonomic scope" value="Eukaryota"/>
</dbReference>
<dbReference type="HOGENOM" id="CLU_013958_2_0_1"/>
<dbReference type="InParanoid" id="E7FFT2"/>
<dbReference type="OMA" id="LIANIRI"/>
<dbReference type="OrthoDB" id="5831905at2759"/>
<dbReference type="TreeFam" id="TF313462"/>
<dbReference type="PRO" id="PR:E7FFT2"/>
<dbReference type="Proteomes" id="UP000000437">
    <property type="component" value="Alternate scaffold 5"/>
</dbReference>
<dbReference type="Proteomes" id="UP000000437">
    <property type="component" value="Chromosome 5"/>
</dbReference>
<dbReference type="GO" id="GO:0005886">
    <property type="term" value="C:plasma membrane"/>
    <property type="evidence" value="ECO:0000314"/>
    <property type="project" value="UniProtKB"/>
</dbReference>
<dbReference type="GO" id="GO:0005262">
    <property type="term" value="F:calcium channel activity"/>
    <property type="evidence" value="ECO:0000250"/>
    <property type="project" value="UniProtKB"/>
</dbReference>
<dbReference type="GO" id="GO:0008381">
    <property type="term" value="F:mechanosensitive monoatomic ion channel activity"/>
    <property type="evidence" value="ECO:0000250"/>
    <property type="project" value="UniProtKB"/>
</dbReference>
<dbReference type="GO" id="GO:0071260">
    <property type="term" value="P:cellular response to mechanical stimulus"/>
    <property type="evidence" value="ECO:0000315"/>
    <property type="project" value="ZFIN"/>
</dbReference>
<dbReference type="GO" id="GO:0050910">
    <property type="term" value="P:detection of mechanical stimulus involved in sensory perception of sound"/>
    <property type="evidence" value="ECO:0000316"/>
    <property type="project" value="ZFIN"/>
</dbReference>
<dbReference type="GO" id="GO:0060119">
    <property type="term" value="P:inner ear receptor cell development"/>
    <property type="evidence" value="ECO:0000270"/>
    <property type="project" value="UniProtKB"/>
</dbReference>
<dbReference type="GO" id="GO:0048882">
    <property type="term" value="P:lateral line development"/>
    <property type="evidence" value="ECO:0000270"/>
    <property type="project" value="UniProtKB"/>
</dbReference>
<dbReference type="GO" id="GO:0060005">
    <property type="term" value="P:vestibular reflex"/>
    <property type="evidence" value="ECO:0000318"/>
    <property type="project" value="GO_Central"/>
</dbReference>
<dbReference type="InterPro" id="IPR038900">
    <property type="entry name" value="TMC"/>
</dbReference>
<dbReference type="InterPro" id="IPR012496">
    <property type="entry name" value="TMC_dom"/>
</dbReference>
<dbReference type="PANTHER" id="PTHR23302:SF17">
    <property type="entry name" value="TRANSMEMBRANE CHANNEL-LIKE PROTEIN 2"/>
    <property type="match status" value="1"/>
</dbReference>
<dbReference type="PANTHER" id="PTHR23302">
    <property type="entry name" value="TRANSMEMBRANE CHANNEL-RELATED"/>
    <property type="match status" value="1"/>
</dbReference>
<dbReference type="Pfam" id="PF07810">
    <property type="entry name" value="TMC"/>
    <property type="match status" value="1"/>
</dbReference>
<sequence length="916" mass="103312">MPKKSDTTRKLEDVGIEIDGDVDSAEEDKKSKGKGGKKAAGGKRGKASEDGEDEDEDDKPPKGRRAANKKKPAPVDEEDSDDDIPQRRSAGNRRRGNVRERGDGDKKKSGKKGRRGGKKNEKGKGKDSDKDSDKDEKKKKNSSGDESDSDEEDESMSEGEMAKLMEEVEEKKKLIANIRNKPWRMRRRLKVLKEAQQFVDKFEGALGKGKGRKLYAYKVMMMKKWIKFKRDFENFRTACIPWERKIKEVESHFGSSVASYFIFLRWMYGMNLVLFSLTFGLVVIPEVLMGLPYGSIPRKTVPREDQDTAMDYSVLTDFNGYCKYSVLFYGYYNNQRTIGFLKFRLPLSYLMVGIGTFGYSLMVVIRTMAKNADVGGGDGEDNEFTFAWKMFTSWDYLIGNAETADNKYASITTSFKESIVDEQENQKDENIHLRRFLRVLANFLITCTLGGSGYLIYFVVKRSQEFQNMDNLSWYEKNELEIIMSLLGLVGPMLFETIAELEEYHPRIALKWQLGRIFALFLGNLYTFLLALFDEVNAKLEEEESIKNASIWFLKEYYANYTANNPNDTGTPPPINPADAIRGPCWETTVGVEFVKLTISDIQVTYLTILIGDFLRAFIVRFLNYCWCWDLEAGWPSYGEFDISGNVLGLVFNQGMIWMGAFYAPGLVGINVLRLLSSMYYQCWAVMACNVPHERVFKASKSNNFYMGLLLLILFLSLLPVVYTIMSLPPSFDCGPFSGKERMFDVVMETIDLDLPAFMGTLFGYVANPGLVISAVLLMVLAIYYLNSVSEAYKNSNNELKKKMQMARDEEKNRRNNKDSTNQVMKDLEDLLPNRPPTPPSPRENIAEKNQGQGGKSAKVKPGTAGGVHLQKDVSLASANPNARGPVTRAPGPRGPGPLPGQPGAGRGQGPPPRRQ</sequence>
<keyword id="KW-1003">Cell membrane</keyword>
<keyword id="KW-0407">Ion channel</keyword>
<keyword id="KW-0406">Ion transport</keyword>
<keyword id="KW-0472">Membrane</keyword>
<keyword id="KW-1185">Reference proteome</keyword>
<keyword id="KW-0812">Transmembrane</keyword>
<keyword id="KW-1133">Transmembrane helix</keyword>
<keyword id="KW-0813">Transport</keyword>
<name>TMC2A_DANRE</name>
<evidence type="ECO:0000250" key="1">
    <source>
        <dbReference type="UniProtKB" id="Q8R4P4"/>
    </source>
</evidence>
<evidence type="ECO:0000255" key="2"/>
<evidence type="ECO:0000255" key="3">
    <source>
        <dbReference type="RuleBase" id="RU310713"/>
    </source>
</evidence>
<evidence type="ECO:0000256" key="4">
    <source>
        <dbReference type="SAM" id="MobiDB-lite"/>
    </source>
</evidence>
<evidence type="ECO:0000269" key="5">
    <source>
    </source>
</evidence>
<evidence type="ECO:0000303" key="6">
    <source>
    </source>
</evidence>
<evidence type="ECO:0000305" key="7"/>
<accession>E7FFT2</accession>
<accession>A0A076V364</accession>
<accession>A2BHH3</accession>
<comment type="function">
    <text evidence="1 5">Pore-forming subunit of the mechanotransducer (MET) non-selective cation channel complex located at tips of hair-cell stereocilia (PubMed:25114259). Highly permeable to calcium and likely transports monovalent cations (By similarity).</text>
</comment>
<comment type="catalytic activity">
    <reaction evidence="1">
        <text>Ca(2+)(in) = Ca(2+)(out)</text>
        <dbReference type="Rhea" id="RHEA:29671"/>
        <dbReference type="ChEBI" id="CHEBI:29108"/>
    </reaction>
</comment>
<comment type="subunit">
    <text evidence="5">Interacts (via N-terminus) with both isoforms CD1 and CD3 of PCDH15A (via cytoplasmic domain); this interaction is required for mechanotransduction of the hair cells and correct localization of PCDH15A in hair bundles of the hair cells.</text>
</comment>
<comment type="subcellular location">
    <subcellularLocation>
        <location evidence="5">Cell membrane</location>
        <topology evidence="3">Multi-pass membrane protein</topology>
    </subcellularLocation>
    <text evidence="5">Localized to mature hair bundles of the hair cells.</text>
</comment>
<comment type="tissue specificity">
    <text evidence="5">In adults, expression is restricted to the hair cells of inner ear and lateral line organ. Expressed at higher levels in the larval inner ear than in the lateral-line neuromasts.</text>
</comment>
<comment type="developmental stage">
    <text evidence="5">Expressed in the nascent hair cells of the developing ear as early as 1 day post fertilization (dpf), and expression in the inner ear continues throughout development. Expression is restricted to the upper hair cell layer of the neuroepithelium at 5 dpf.</text>
</comment>
<comment type="similarity">
    <text evidence="3">Belongs to the TMC family.</text>
</comment>
<organism>
    <name type="scientific">Danio rerio</name>
    <name type="common">Zebrafish</name>
    <name type="synonym">Brachydanio rerio</name>
    <dbReference type="NCBI Taxonomy" id="7955"/>
    <lineage>
        <taxon>Eukaryota</taxon>
        <taxon>Metazoa</taxon>
        <taxon>Chordata</taxon>
        <taxon>Craniata</taxon>
        <taxon>Vertebrata</taxon>
        <taxon>Euteleostomi</taxon>
        <taxon>Actinopterygii</taxon>
        <taxon>Neopterygii</taxon>
        <taxon>Teleostei</taxon>
        <taxon>Ostariophysi</taxon>
        <taxon>Cypriniformes</taxon>
        <taxon>Danionidae</taxon>
        <taxon>Danioninae</taxon>
        <taxon>Danio</taxon>
    </lineage>
</organism>